<reference key="1">
    <citation type="journal article" date="2011" name="J. Bacteriol.">
        <title>Comparative genomics of 28 Salmonella enterica isolates: evidence for CRISPR-mediated adaptive sublineage evolution.</title>
        <authorList>
            <person name="Fricke W.F."/>
            <person name="Mammel M.K."/>
            <person name="McDermott P.F."/>
            <person name="Tartera C."/>
            <person name="White D.G."/>
            <person name="Leclerc J.E."/>
            <person name="Ravel J."/>
            <person name="Cebula T.A."/>
        </authorList>
    </citation>
    <scope>NUCLEOTIDE SEQUENCE [LARGE SCALE GENOMIC DNA]</scope>
    <source>
        <strain>SL254</strain>
    </source>
</reference>
<sequence>MSEKYVVTWDMLQIHARKLASRLMPSEQWKGIIAVSRGGLVPGALLARELGIRHVDTVCISSYDHDNQRELKVLKRAEGDGEGFIVIDDLVDTGGTAVAIREMYPKAHFVTIFAKPAGRPLVDDYVIDIPQNTWIEQPWDMGVVFVPPISGR</sequence>
<proteinExistence type="inferred from homology"/>
<evidence type="ECO:0000255" key="1">
    <source>
        <dbReference type="HAMAP-Rule" id="MF_01903"/>
    </source>
</evidence>
<gene>
    <name evidence="1" type="primary">gpt</name>
    <name type="ordered locus">SNSL254_A0356</name>
</gene>
<accession>B4SVV9</accession>
<name>XGPT_SALNS</name>
<protein>
    <recommendedName>
        <fullName evidence="1">Xanthine-guanine phosphoribosyltransferase</fullName>
        <shortName evidence="1">XGPRT</shortName>
        <ecNumber evidence="1">2.4.2.-</ecNumber>
        <ecNumber evidence="1">2.4.2.22</ecNumber>
    </recommendedName>
    <alternativeName>
        <fullName evidence="1">Xanthine phosphoribosyltransferase</fullName>
    </alternativeName>
</protein>
<dbReference type="EC" id="2.4.2.-" evidence="1"/>
<dbReference type="EC" id="2.4.2.22" evidence="1"/>
<dbReference type="EMBL" id="CP001113">
    <property type="protein sequence ID" value="ACF63568.1"/>
    <property type="molecule type" value="Genomic_DNA"/>
</dbReference>
<dbReference type="RefSeq" id="WP_001292018.1">
    <property type="nucleotide sequence ID" value="NZ_CCMR01000003.1"/>
</dbReference>
<dbReference type="SMR" id="B4SVV9"/>
<dbReference type="GeneID" id="66754798"/>
<dbReference type="KEGG" id="see:SNSL254_A0356"/>
<dbReference type="HOGENOM" id="CLU_080904_3_0_6"/>
<dbReference type="UniPathway" id="UPA00602">
    <property type="reaction ID" value="UER00658"/>
</dbReference>
<dbReference type="UniPathway" id="UPA00909">
    <property type="reaction ID" value="UER00887"/>
</dbReference>
<dbReference type="Proteomes" id="UP000008824">
    <property type="component" value="Chromosome"/>
</dbReference>
<dbReference type="GO" id="GO:0005829">
    <property type="term" value="C:cytosol"/>
    <property type="evidence" value="ECO:0007669"/>
    <property type="project" value="TreeGrafter"/>
</dbReference>
<dbReference type="GO" id="GO:0005886">
    <property type="term" value="C:plasma membrane"/>
    <property type="evidence" value="ECO:0007669"/>
    <property type="project" value="UniProtKB-SubCell"/>
</dbReference>
<dbReference type="GO" id="GO:0052657">
    <property type="term" value="F:guanine phosphoribosyltransferase activity"/>
    <property type="evidence" value="ECO:0007669"/>
    <property type="project" value="RHEA"/>
</dbReference>
<dbReference type="GO" id="GO:0004422">
    <property type="term" value="F:hypoxanthine phosphoribosyltransferase activity"/>
    <property type="evidence" value="ECO:0007669"/>
    <property type="project" value="TreeGrafter"/>
</dbReference>
<dbReference type="GO" id="GO:0000287">
    <property type="term" value="F:magnesium ion binding"/>
    <property type="evidence" value="ECO:0007669"/>
    <property type="project" value="UniProtKB-UniRule"/>
</dbReference>
<dbReference type="GO" id="GO:0000310">
    <property type="term" value="F:xanthine phosphoribosyltransferase activity"/>
    <property type="evidence" value="ECO:0007669"/>
    <property type="project" value="UniProtKB-UniRule"/>
</dbReference>
<dbReference type="GO" id="GO:0032263">
    <property type="term" value="P:GMP salvage"/>
    <property type="evidence" value="ECO:0007669"/>
    <property type="project" value="UniProtKB-UniRule"/>
</dbReference>
<dbReference type="GO" id="GO:0032264">
    <property type="term" value="P:IMP salvage"/>
    <property type="evidence" value="ECO:0007669"/>
    <property type="project" value="TreeGrafter"/>
</dbReference>
<dbReference type="GO" id="GO:0006166">
    <property type="term" value="P:purine ribonucleoside salvage"/>
    <property type="evidence" value="ECO:0007669"/>
    <property type="project" value="UniProtKB-KW"/>
</dbReference>
<dbReference type="GO" id="GO:0032265">
    <property type="term" value="P:XMP salvage"/>
    <property type="evidence" value="ECO:0007669"/>
    <property type="project" value="UniProtKB-UniRule"/>
</dbReference>
<dbReference type="CDD" id="cd06223">
    <property type="entry name" value="PRTases_typeI"/>
    <property type="match status" value="1"/>
</dbReference>
<dbReference type="FunFam" id="3.40.50.2020:FF:000009">
    <property type="entry name" value="Xanthine phosphoribosyltransferase"/>
    <property type="match status" value="1"/>
</dbReference>
<dbReference type="Gene3D" id="3.40.50.2020">
    <property type="match status" value="1"/>
</dbReference>
<dbReference type="HAMAP" id="MF_01903">
    <property type="entry name" value="XGPRT"/>
    <property type="match status" value="1"/>
</dbReference>
<dbReference type="InterPro" id="IPR000836">
    <property type="entry name" value="PRibTrfase_dom"/>
</dbReference>
<dbReference type="InterPro" id="IPR029057">
    <property type="entry name" value="PRTase-like"/>
</dbReference>
<dbReference type="InterPro" id="IPR023747">
    <property type="entry name" value="Xanthine_Guanine_PRibTrfase"/>
</dbReference>
<dbReference type="NCBIfam" id="NF006613">
    <property type="entry name" value="PRK09177.1"/>
    <property type="match status" value="1"/>
</dbReference>
<dbReference type="PANTHER" id="PTHR39563">
    <property type="entry name" value="XANTHINE PHOSPHORIBOSYLTRANSFERASE"/>
    <property type="match status" value="1"/>
</dbReference>
<dbReference type="PANTHER" id="PTHR39563:SF1">
    <property type="entry name" value="XANTHINE-GUANINE PHOSPHORIBOSYLTRANSFERASE"/>
    <property type="match status" value="1"/>
</dbReference>
<dbReference type="Pfam" id="PF00156">
    <property type="entry name" value="Pribosyltran"/>
    <property type="match status" value="1"/>
</dbReference>
<dbReference type="SUPFAM" id="SSF53271">
    <property type="entry name" value="PRTase-like"/>
    <property type="match status" value="1"/>
</dbReference>
<dbReference type="PROSITE" id="PS00103">
    <property type="entry name" value="PUR_PYR_PR_TRANSFER"/>
    <property type="match status" value="1"/>
</dbReference>
<keyword id="KW-0997">Cell inner membrane</keyword>
<keyword id="KW-1003">Cell membrane</keyword>
<keyword id="KW-0328">Glycosyltransferase</keyword>
<keyword id="KW-0460">Magnesium</keyword>
<keyword id="KW-0472">Membrane</keyword>
<keyword id="KW-0479">Metal-binding</keyword>
<keyword id="KW-0660">Purine salvage</keyword>
<keyword id="KW-0808">Transferase</keyword>
<comment type="function">
    <text evidence="1">Purine salvage pathway enzyme that catalyzes the transfer of the ribosyl-5-phosphate group from 5-phospho-alpha-D-ribose 1-diphosphate (PRPP) to the N9 position of the 6-oxopurines guanine and xanthine to form the corresponding ribonucleotides GMP (guanosine 5'-monophosphate) and XMP (xanthosine 5'-monophosphate), with the release of PPi. To a lesser extent, also acts on hypoxanthine.</text>
</comment>
<comment type="catalytic activity">
    <reaction evidence="1">
        <text>GMP + diphosphate = guanine + 5-phospho-alpha-D-ribose 1-diphosphate</text>
        <dbReference type="Rhea" id="RHEA:25424"/>
        <dbReference type="ChEBI" id="CHEBI:16235"/>
        <dbReference type="ChEBI" id="CHEBI:33019"/>
        <dbReference type="ChEBI" id="CHEBI:58017"/>
        <dbReference type="ChEBI" id="CHEBI:58115"/>
    </reaction>
    <physiologicalReaction direction="right-to-left" evidence="1">
        <dbReference type="Rhea" id="RHEA:25426"/>
    </physiologicalReaction>
</comment>
<comment type="catalytic activity">
    <reaction evidence="1">
        <text>XMP + diphosphate = xanthine + 5-phospho-alpha-D-ribose 1-diphosphate</text>
        <dbReference type="Rhea" id="RHEA:10800"/>
        <dbReference type="ChEBI" id="CHEBI:17712"/>
        <dbReference type="ChEBI" id="CHEBI:33019"/>
        <dbReference type="ChEBI" id="CHEBI:57464"/>
        <dbReference type="ChEBI" id="CHEBI:58017"/>
        <dbReference type="EC" id="2.4.2.22"/>
    </reaction>
    <physiologicalReaction direction="right-to-left" evidence="1">
        <dbReference type="Rhea" id="RHEA:10802"/>
    </physiologicalReaction>
</comment>
<comment type="catalytic activity">
    <reaction evidence="1">
        <text>IMP + diphosphate = hypoxanthine + 5-phospho-alpha-D-ribose 1-diphosphate</text>
        <dbReference type="Rhea" id="RHEA:17973"/>
        <dbReference type="ChEBI" id="CHEBI:17368"/>
        <dbReference type="ChEBI" id="CHEBI:33019"/>
        <dbReference type="ChEBI" id="CHEBI:58017"/>
        <dbReference type="ChEBI" id="CHEBI:58053"/>
    </reaction>
    <physiologicalReaction direction="right-to-left" evidence="1">
        <dbReference type="Rhea" id="RHEA:17975"/>
    </physiologicalReaction>
</comment>
<comment type="cofactor">
    <cofactor evidence="1">
        <name>Mg(2+)</name>
        <dbReference type="ChEBI" id="CHEBI:18420"/>
    </cofactor>
</comment>
<comment type="pathway">
    <text evidence="1">Purine metabolism; GMP biosynthesis via salvage pathway; GMP from guanine: step 1/1.</text>
</comment>
<comment type="pathway">
    <text evidence="1">Purine metabolism; XMP biosynthesis via salvage pathway; XMP from xanthine: step 1/1.</text>
</comment>
<comment type="subunit">
    <text evidence="1">Homotetramer.</text>
</comment>
<comment type="subcellular location">
    <subcellularLocation>
        <location evidence="1">Cell inner membrane</location>
        <topology evidence="1">Peripheral membrane protein</topology>
    </subcellularLocation>
</comment>
<comment type="similarity">
    <text evidence="1">Belongs to the purine/pyrimidine phosphoribosyltransferase family. XGPT subfamily.</text>
</comment>
<organism>
    <name type="scientific">Salmonella newport (strain SL254)</name>
    <dbReference type="NCBI Taxonomy" id="423368"/>
    <lineage>
        <taxon>Bacteria</taxon>
        <taxon>Pseudomonadati</taxon>
        <taxon>Pseudomonadota</taxon>
        <taxon>Gammaproteobacteria</taxon>
        <taxon>Enterobacterales</taxon>
        <taxon>Enterobacteriaceae</taxon>
        <taxon>Salmonella</taxon>
    </lineage>
</organism>
<feature type="chain" id="PRO_1000188757" description="Xanthine-guanine phosphoribosyltransferase">
    <location>
        <begin position="1"/>
        <end position="152"/>
    </location>
</feature>
<feature type="binding site" evidence="1">
    <location>
        <begin position="37"/>
        <end position="38"/>
    </location>
    <ligand>
        <name>5-phospho-alpha-D-ribose 1-diphosphate</name>
        <dbReference type="ChEBI" id="CHEBI:58017"/>
    </ligand>
</feature>
<feature type="binding site" evidence="1">
    <location>
        <position position="69"/>
    </location>
    <ligand>
        <name>5-phospho-alpha-D-ribose 1-diphosphate</name>
        <dbReference type="ChEBI" id="CHEBI:58017"/>
    </ligand>
</feature>
<feature type="binding site" evidence="1">
    <location>
        <position position="69"/>
    </location>
    <ligand>
        <name>GMP</name>
        <dbReference type="ChEBI" id="CHEBI:58115"/>
    </ligand>
</feature>
<feature type="binding site" evidence="1">
    <location>
        <begin position="88"/>
        <end position="96"/>
    </location>
    <ligand>
        <name>5-phospho-alpha-D-ribose 1-diphosphate</name>
        <dbReference type="ChEBI" id="CHEBI:58017"/>
    </ligand>
</feature>
<feature type="binding site" evidence="1">
    <location>
        <position position="89"/>
    </location>
    <ligand>
        <name>Mg(2+)</name>
        <dbReference type="ChEBI" id="CHEBI:18420"/>
    </ligand>
</feature>
<feature type="binding site" evidence="1">
    <location>
        <begin position="92"/>
        <end position="96"/>
    </location>
    <ligand>
        <name>GMP</name>
        <dbReference type="ChEBI" id="CHEBI:58115"/>
    </ligand>
</feature>
<feature type="binding site" evidence="1">
    <location>
        <position position="92"/>
    </location>
    <ligand>
        <name>guanine</name>
        <dbReference type="ChEBI" id="CHEBI:16235"/>
    </ligand>
</feature>
<feature type="binding site" evidence="1">
    <location>
        <position position="92"/>
    </location>
    <ligand>
        <name>xanthine</name>
        <dbReference type="ChEBI" id="CHEBI:17712"/>
    </ligand>
</feature>
<feature type="binding site" evidence="1">
    <location>
        <begin position="134"/>
        <end position="135"/>
    </location>
    <ligand>
        <name>GMP</name>
        <dbReference type="ChEBI" id="CHEBI:58115"/>
    </ligand>
</feature>
<feature type="binding site" evidence="1">
    <location>
        <position position="135"/>
    </location>
    <ligand>
        <name>guanine</name>
        <dbReference type="ChEBI" id="CHEBI:16235"/>
    </ligand>
</feature>
<feature type="binding site" evidence="1">
    <location>
        <position position="135"/>
    </location>
    <ligand>
        <name>xanthine</name>
        <dbReference type="ChEBI" id="CHEBI:17712"/>
    </ligand>
</feature>